<evidence type="ECO:0000250" key="1"/>
<evidence type="ECO:0000305" key="2"/>
<gene>
    <name type="primary">lpxC/fabZ</name>
    <name type="ordered locus">CT1662</name>
</gene>
<proteinExistence type="inferred from homology"/>
<keyword id="KW-0963">Cytoplasm</keyword>
<keyword id="KW-0378">Hydrolase</keyword>
<keyword id="KW-0441">Lipid A biosynthesis</keyword>
<keyword id="KW-0444">Lipid biosynthesis</keyword>
<keyword id="KW-0443">Lipid metabolism</keyword>
<keyword id="KW-0456">Lyase</keyword>
<keyword id="KW-0479">Metal-binding</keyword>
<keyword id="KW-0511">Multifunctional enzyme</keyword>
<keyword id="KW-1185">Reference proteome</keyword>
<keyword id="KW-0862">Zinc</keyword>
<dbReference type="EC" id="3.5.1.108"/>
<dbReference type="EC" id="4.2.1.59"/>
<dbReference type="EMBL" id="AE006470">
    <property type="protein sequence ID" value="AAM72887.1"/>
    <property type="molecule type" value="Genomic_DNA"/>
</dbReference>
<dbReference type="RefSeq" id="NP_662545.1">
    <property type="nucleotide sequence ID" value="NC_002932.3"/>
</dbReference>
<dbReference type="RefSeq" id="WP_010933326.1">
    <property type="nucleotide sequence ID" value="NC_002932.3"/>
</dbReference>
<dbReference type="STRING" id="194439.CT1662"/>
<dbReference type="EnsemblBacteria" id="AAM72887">
    <property type="protein sequence ID" value="AAM72887"/>
    <property type="gene ID" value="CT1662"/>
</dbReference>
<dbReference type="KEGG" id="cte:CT1662"/>
<dbReference type="PATRIC" id="fig|194439.7.peg.1500"/>
<dbReference type="eggNOG" id="COG0764">
    <property type="taxonomic scope" value="Bacteria"/>
</dbReference>
<dbReference type="eggNOG" id="COG0774">
    <property type="taxonomic scope" value="Bacteria"/>
</dbReference>
<dbReference type="HOGENOM" id="CLU_046528_2_0_10"/>
<dbReference type="OrthoDB" id="9772788at2"/>
<dbReference type="UniPathway" id="UPA00359">
    <property type="reaction ID" value="UER00478"/>
</dbReference>
<dbReference type="Proteomes" id="UP000001007">
    <property type="component" value="Chromosome"/>
</dbReference>
<dbReference type="GO" id="GO:0005737">
    <property type="term" value="C:cytoplasm"/>
    <property type="evidence" value="ECO:0007669"/>
    <property type="project" value="UniProtKB-SubCell"/>
</dbReference>
<dbReference type="GO" id="GO:0016020">
    <property type="term" value="C:membrane"/>
    <property type="evidence" value="ECO:0007669"/>
    <property type="project" value="GOC"/>
</dbReference>
<dbReference type="GO" id="GO:0019171">
    <property type="term" value="F:(3R)-hydroxyacyl-[acyl-carrier-protein] dehydratase activity"/>
    <property type="evidence" value="ECO:0007669"/>
    <property type="project" value="UniProtKB-EC"/>
</dbReference>
<dbReference type="GO" id="GO:0046872">
    <property type="term" value="F:metal ion binding"/>
    <property type="evidence" value="ECO:0007669"/>
    <property type="project" value="UniProtKB-KW"/>
</dbReference>
<dbReference type="GO" id="GO:0103117">
    <property type="term" value="F:UDP-3-O-acyl-N-acetylglucosamine deacetylase activity"/>
    <property type="evidence" value="ECO:0007669"/>
    <property type="project" value="UniProtKB-UniRule"/>
</dbReference>
<dbReference type="GO" id="GO:0006633">
    <property type="term" value="P:fatty acid biosynthetic process"/>
    <property type="evidence" value="ECO:0007669"/>
    <property type="project" value="UniProtKB-UniRule"/>
</dbReference>
<dbReference type="GO" id="GO:0009245">
    <property type="term" value="P:lipid A biosynthetic process"/>
    <property type="evidence" value="ECO:0007669"/>
    <property type="project" value="UniProtKB-UniRule"/>
</dbReference>
<dbReference type="CDD" id="cd01288">
    <property type="entry name" value="FabZ"/>
    <property type="match status" value="1"/>
</dbReference>
<dbReference type="FunFam" id="3.10.129.10:FF:000001">
    <property type="entry name" value="3-hydroxyacyl-[acyl-carrier-protein] dehydratase FabZ"/>
    <property type="match status" value="1"/>
</dbReference>
<dbReference type="Gene3D" id="3.10.129.10">
    <property type="entry name" value="Hotdog Thioesterase"/>
    <property type="match status" value="1"/>
</dbReference>
<dbReference type="Gene3D" id="3.30.230.20">
    <property type="entry name" value="lpxc deacetylase, domain 1"/>
    <property type="match status" value="1"/>
</dbReference>
<dbReference type="Gene3D" id="3.30.1700.10">
    <property type="entry name" value="lpxc deacetylase, domain 2"/>
    <property type="match status" value="1"/>
</dbReference>
<dbReference type="HAMAP" id="MF_00406">
    <property type="entry name" value="FabZ"/>
    <property type="match status" value="1"/>
</dbReference>
<dbReference type="HAMAP" id="MF_00388">
    <property type="entry name" value="LpxC"/>
    <property type="match status" value="1"/>
</dbReference>
<dbReference type="InterPro" id="IPR013114">
    <property type="entry name" value="FabA_FabZ"/>
</dbReference>
<dbReference type="InterPro" id="IPR010084">
    <property type="entry name" value="FabZ"/>
</dbReference>
<dbReference type="InterPro" id="IPR029069">
    <property type="entry name" value="HotDog_dom_sf"/>
</dbReference>
<dbReference type="InterPro" id="IPR020568">
    <property type="entry name" value="Ribosomal_Su5_D2-typ_SF"/>
</dbReference>
<dbReference type="InterPro" id="IPR004463">
    <property type="entry name" value="UDP-acyl_GlcNac_deAcase"/>
</dbReference>
<dbReference type="InterPro" id="IPR011334">
    <property type="entry name" value="UDP-acyl_GlcNac_deAcase_C"/>
</dbReference>
<dbReference type="InterPro" id="IPR015870">
    <property type="entry name" value="UDP-acyl_N-AcGlcN_deAcase_N"/>
</dbReference>
<dbReference type="NCBIfam" id="TIGR01750">
    <property type="entry name" value="fabZ"/>
    <property type="match status" value="1"/>
</dbReference>
<dbReference type="NCBIfam" id="TIGR00325">
    <property type="entry name" value="lpxC"/>
    <property type="match status" value="1"/>
</dbReference>
<dbReference type="NCBIfam" id="NF000582">
    <property type="entry name" value="PRK00006.1"/>
    <property type="match status" value="1"/>
</dbReference>
<dbReference type="NCBIfam" id="NF009667">
    <property type="entry name" value="PRK13188.1"/>
    <property type="match status" value="1"/>
</dbReference>
<dbReference type="PANTHER" id="PTHR33694">
    <property type="entry name" value="UDP-3-O-ACYL-N-ACETYLGLUCOSAMINE DEACETYLASE 1, MITOCHONDRIAL-RELATED"/>
    <property type="match status" value="1"/>
</dbReference>
<dbReference type="PANTHER" id="PTHR33694:SF1">
    <property type="entry name" value="UDP-3-O-ACYL-N-ACETYLGLUCOSAMINE DEACETYLASE 1, MITOCHONDRIAL-RELATED"/>
    <property type="match status" value="1"/>
</dbReference>
<dbReference type="Pfam" id="PF07977">
    <property type="entry name" value="FabA"/>
    <property type="match status" value="1"/>
</dbReference>
<dbReference type="Pfam" id="PF03331">
    <property type="entry name" value="LpxC"/>
    <property type="match status" value="2"/>
</dbReference>
<dbReference type="SUPFAM" id="SSF54211">
    <property type="entry name" value="Ribosomal protein S5 domain 2-like"/>
    <property type="match status" value="2"/>
</dbReference>
<dbReference type="SUPFAM" id="SSF54637">
    <property type="entry name" value="Thioesterase/thiol ester dehydrase-isomerase"/>
    <property type="match status" value="1"/>
</dbReference>
<comment type="function">
    <text>Catalyzes the hydrolysis of UDP-3-O-myristoyl-N-acetylglucosamine to form UDP-3-O-myristoylglucosamine and acetate, the committed step in lipid A biosynthesis.</text>
</comment>
<comment type="function">
    <text evidence="1">Involved in unsaturated fatty acids biosynthesis. Catalyzes the dehydration of short chain beta-hydroxyacyl-ACPs and long chain saturated and unsaturated beta-hydroxyacyl-ACPs.</text>
</comment>
<comment type="catalytic activity">
    <reaction>
        <text>a UDP-3-O-[(3R)-3-hydroxyacyl]-N-acetyl-alpha-D-glucosamine + H2O = a UDP-3-O-[(3R)-3-hydroxyacyl]-alpha-D-glucosamine + acetate</text>
        <dbReference type="Rhea" id="RHEA:67816"/>
        <dbReference type="ChEBI" id="CHEBI:15377"/>
        <dbReference type="ChEBI" id="CHEBI:30089"/>
        <dbReference type="ChEBI" id="CHEBI:137740"/>
        <dbReference type="ChEBI" id="CHEBI:173225"/>
        <dbReference type="EC" id="3.5.1.108"/>
    </reaction>
</comment>
<comment type="catalytic activity">
    <reaction>
        <text>a (3R)-hydroxyacyl-[ACP] = a (2E)-enoyl-[ACP] + H2O</text>
        <dbReference type="Rhea" id="RHEA:13097"/>
        <dbReference type="Rhea" id="RHEA-COMP:9925"/>
        <dbReference type="Rhea" id="RHEA-COMP:9945"/>
        <dbReference type="ChEBI" id="CHEBI:15377"/>
        <dbReference type="ChEBI" id="CHEBI:78784"/>
        <dbReference type="ChEBI" id="CHEBI:78827"/>
        <dbReference type="EC" id="4.2.1.59"/>
    </reaction>
</comment>
<comment type="cofactor">
    <cofactor>
        <name>Zn(2+)</name>
        <dbReference type="ChEBI" id="CHEBI:29105"/>
    </cofactor>
</comment>
<comment type="pathway">
    <text>Glycolipid biosynthesis; lipid IV(A) biosynthesis; lipid IV(A) from (3R)-3-hydroxytetradecanoyl-[acyl-carrier-protein] and UDP-N-acetyl-alpha-D-glucosamine: step 2/6.</text>
</comment>
<comment type="subcellular location">
    <subcellularLocation>
        <location evidence="1">Cytoplasm</location>
    </subcellularLocation>
</comment>
<comment type="similarity">
    <text evidence="2">In the N-terminal section; belongs to the LpxC family.</text>
</comment>
<comment type="similarity">
    <text evidence="2">In the C-terminal section; belongs to the thioester dehydratase family.</text>
</comment>
<protein>
    <recommendedName>
        <fullName>Bifunctional enzyme LpxC/FabZ</fullName>
    </recommendedName>
    <domain>
        <recommendedName>
            <fullName>UDP-3-O-acyl-N-acetylglucosamine deacetylase</fullName>
            <shortName>UDP-3-O-acyl-GlcNAc deacetylase</shortName>
            <ecNumber>3.5.1.108</ecNumber>
        </recommendedName>
        <alternativeName>
            <fullName>UDP-3-O-[R-3-hydroxymyristoyl]-N-acetylglucosamine deacetylase</fullName>
        </alternativeName>
    </domain>
    <domain>
        <recommendedName>
            <fullName>3-hydroxyacyl-[acyl-carrier-protein] dehydratase FabZ</fullName>
            <ecNumber>4.2.1.59</ecNumber>
        </recommendedName>
        <alternativeName>
            <fullName>(3R)-hydroxymyristoyl-[acyl-carrier-protein] dehydratase</fullName>
            <shortName>(3R)-hydroxymyristoyl-ACP dehydrase</shortName>
        </alternativeName>
        <alternativeName>
            <fullName>Beta-hydroxyacyl-ACP dehydratase</fullName>
        </alternativeName>
    </domain>
</protein>
<accession>Q8KBX0</accession>
<reference key="1">
    <citation type="journal article" date="2002" name="Proc. Natl. Acad. Sci. U.S.A.">
        <title>The complete genome sequence of Chlorobium tepidum TLS, a photosynthetic, anaerobic, green-sulfur bacterium.</title>
        <authorList>
            <person name="Eisen J.A."/>
            <person name="Nelson K.E."/>
            <person name="Paulsen I.T."/>
            <person name="Heidelberg J.F."/>
            <person name="Wu M."/>
            <person name="Dodson R.J."/>
            <person name="DeBoy R.T."/>
            <person name="Gwinn M.L."/>
            <person name="Nelson W.C."/>
            <person name="Haft D.H."/>
            <person name="Hickey E.K."/>
            <person name="Peterson J.D."/>
            <person name="Durkin A.S."/>
            <person name="Kolonay J.F."/>
            <person name="Yang F."/>
            <person name="Holt I.E."/>
            <person name="Umayam L.A."/>
            <person name="Mason T.M."/>
            <person name="Brenner M."/>
            <person name="Shea T.P."/>
            <person name="Parksey D.S."/>
            <person name="Nierman W.C."/>
            <person name="Feldblyum T.V."/>
            <person name="Hansen C.L."/>
            <person name="Craven M.B."/>
            <person name="Radune D."/>
            <person name="Vamathevan J.J."/>
            <person name="Khouri H.M."/>
            <person name="White O."/>
            <person name="Gruber T.M."/>
            <person name="Ketchum K.A."/>
            <person name="Venter J.C."/>
            <person name="Tettelin H."/>
            <person name="Bryant D.A."/>
            <person name="Fraser C.M."/>
        </authorList>
    </citation>
    <scope>NUCLEOTIDE SEQUENCE [LARGE SCALE GENOMIC DNA]</scope>
    <source>
        <strain>ATCC 49652 / DSM 12025 / NBRC 103806 / TLS</strain>
    </source>
</reference>
<sequence length="467" mass="51844">MLIHQRTLQNEISLTGIGLHTGHECTITFKPAPVNTGYIFVRTDINDCPEIPALIDHVVDVLRGTTIGIGDVKVHTTEHVLAALYGLQIDNCRIELSGPEPPVLDGSSNPFAEALLSAGIAEQDEPKNYLVIDETIEFHNPEKSVDIVALPLDGFRMTVMVDYKNPALGSQHSGLFDLDKEFLREFSPCRTFCFLSEVEAMANQGIIKGADIDNAIVIVDKQLDETEVQTLADKVGVDASHLVLGQNGILNNRELRFSNEPARHKLLDLLGDLALLGMPVKAQILAXRPGHASNVEFVKQLKKYADRNKLARQYQHEKKAGVIFDINAIQNILPHRYPFLLIDKIVEFKLDEKIVSIKNVTMNEPFFQGHFPGNPIMPGVLIIEAMAQTGGIMMLNGKENIKESVVFFMGIDKARFRKPVLPGDTLVIEAVMTNMRRTVCQFDAKAYVRGELVCEASLMATVMEKKN</sequence>
<feature type="chain" id="PRO_0000191974" description="Bifunctional enzyme LpxC/FabZ">
    <location>
        <begin position="1"/>
        <end position="467"/>
    </location>
</feature>
<feature type="region of interest" description="UDP-3-O-acyl-N-acetylglucosamine deacetylase">
    <location>
        <begin position="1"/>
        <end position="306"/>
    </location>
</feature>
<feature type="region of interest" description="3-hydroxyacyl-[acyl-carrier-protein] dehydratase">
    <location>
        <begin position="307"/>
        <end position="467"/>
    </location>
</feature>
<feature type="active site" description="Proton donor" evidence="1">
    <location>
        <position position="291"/>
    </location>
</feature>
<feature type="active site" evidence="1">
    <location>
        <position position="370"/>
    </location>
</feature>
<feature type="binding site" evidence="1">
    <location>
        <position position="79"/>
    </location>
    <ligand>
        <name>Zn(2+)</name>
        <dbReference type="ChEBI" id="CHEBI:29105"/>
    </ligand>
</feature>
<feature type="binding site" evidence="1">
    <location>
        <position position="264"/>
    </location>
    <ligand>
        <name>Zn(2+)</name>
        <dbReference type="ChEBI" id="CHEBI:29105"/>
    </ligand>
</feature>
<feature type="binding site" evidence="1">
    <location>
        <position position="268"/>
    </location>
    <ligand>
        <name>Zn(2+)</name>
        <dbReference type="ChEBI" id="CHEBI:29105"/>
    </ligand>
</feature>
<name>LPXZ_CHLTE</name>
<organism>
    <name type="scientific">Chlorobaculum tepidum (strain ATCC 49652 / DSM 12025 / NBRC 103806 / TLS)</name>
    <name type="common">Chlorobium tepidum</name>
    <dbReference type="NCBI Taxonomy" id="194439"/>
    <lineage>
        <taxon>Bacteria</taxon>
        <taxon>Pseudomonadati</taxon>
        <taxon>Chlorobiota</taxon>
        <taxon>Chlorobiia</taxon>
        <taxon>Chlorobiales</taxon>
        <taxon>Chlorobiaceae</taxon>
        <taxon>Chlorobaculum</taxon>
    </lineage>
</organism>